<evidence type="ECO:0000255" key="1">
    <source>
        <dbReference type="HAMAP-Rule" id="MF_01824"/>
    </source>
</evidence>
<evidence type="ECO:0000256" key="2">
    <source>
        <dbReference type="SAM" id="MobiDB-lite"/>
    </source>
</evidence>
<accession>Q3INE8</accession>
<keyword id="KW-0456">Lyase</keyword>
<keyword id="KW-0663">Pyridoxal phosphate</keyword>
<keyword id="KW-1185">Reference proteome</keyword>
<keyword id="KW-0704">Schiff base</keyword>
<dbReference type="EC" id="4.3.3.6" evidence="1"/>
<dbReference type="EMBL" id="CR936257">
    <property type="protein sequence ID" value="CAI50355.1"/>
    <property type="molecule type" value="Genomic_DNA"/>
</dbReference>
<dbReference type="RefSeq" id="WP_011323970.1">
    <property type="nucleotide sequence ID" value="NC_007426.1"/>
</dbReference>
<dbReference type="SMR" id="Q3INE8"/>
<dbReference type="STRING" id="348780.NP_4528A"/>
<dbReference type="EnsemblBacteria" id="CAI50355">
    <property type="protein sequence ID" value="CAI50355"/>
    <property type="gene ID" value="NP_4528A"/>
</dbReference>
<dbReference type="GeneID" id="3703089"/>
<dbReference type="KEGG" id="nph:NP_4528A"/>
<dbReference type="eggNOG" id="arCOG04075">
    <property type="taxonomic scope" value="Archaea"/>
</dbReference>
<dbReference type="HOGENOM" id="CLU_055352_1_0_2"/>
<dbReference type="OrthoDB" id="6840at2157"/>
<dbReference type="UniPathway" id="UPA00245"/>
<dbReference type="Proteomes" id="UP000002698">
    <property type="component" value="Chromosome"/>
</dbReference>
<dbReference type="GO" id="GO:0036381">
    <property type="term" value="F:pyridoxal 5'-phosphate synthase (glutamine hydrolysing) activity"/>
    <property type="evidence" value="ECO:0007669"/>
    <property type="project" value="UniProtKB-UniRule"/>
</dbReference>
<dbReference type="GO" id="GO:0006520">
    <property type="term" value="P:amino acid metabolic process"/>
    <property type="evidence" value="ECO:0007669"/>
    <property type="project" value="TreeGrafter"/>
</dbReference>
<dbReference type="GO" id="GO:0042823">
    <property type="term" value="P:pyridoxal phosphate biosynthetic process"/>
    <property type="evidence" value="ECO:0007669"/>
    <property type="project" value="UniProtKB-UniRule"/>
</dbReference>
<dbReference type="GO" id="GO:0008615">
    <property type="term" value="P:pyridoxine biosynthetic process"/>
    <property type="evidence" value="ECO:0007669"/>
    <property type="project" value="TreeGrafter"/>
</dbReference>
<dbReference type="CDD" id="cd04727">
    <property type="entry name" value="pdxS"/>
    <property type="match status" value="1"/>
</dbReference>
<dbReference type="FunFam" id="3.20.20.70:FF:000001">
    <property type="entry name" value="Pyridoxine biosynthesis protein PDX1"/>
    <property type="match status" value="1"/>
</dbReference>
<dbReference type="Gene3D" id="3.20.20.70">
    <property type="entry name" value="Aldolase class I"/>
    <property type="match status" value="1"/>
</dbReference>
<dbReference type="HAMAP" id="MF_01824">
    <property type="entry name" value="PdxS"/>
    <property type="match status" value="1"/>
</dbReference>
<dbReference type="InterPro" id="IPR013785">
    <property type="entry name" value="Aldolase_TIM"/>
</dbReference>
<dbReference type="InterPro" id="IPR001852">
    <property type="entry name" value="PdxS/SNZ"/>
</dbReference>
<dbReference type="InterPro" id="IPR033755">
    <property type="entry name" value="PdxS/SNZ_N"/>
</dbReference>
<dbReference type="InterPro" id="IPR011060">
    <property type="entry name" value="RibuloseP-bd_barrel"/>
</dbReference>
<dbReference type="NCBIfam" id="NF003215">
    <property type="entry name" value="PRK04180.1"/>
    <property type="match status" value="1"/>
</dbReference>
<dbReference type="PANTHER" id="PTHR31829">
    <property type="entry name" value="PYRIDOXAL 5'-PHOSPHATE SYNTHASE SUBUNIT SNZ1-RELATED"/>
    <property type="match status" value="1"/>
</dbReference>
<dbReference type="PANTHER" id="PTHR31829:SF0">
    <property type="entry name" value="PYRIDOXAL 5'-PHOSPHATE SYNTHASE SUBUNIT SNZ1-RELATED"/>
    <property type="match status" value="1"/>
</dbReference>
<dbReference type="Pfam" id="PF01680">
    <property type="entry name" value="SOR_SNZ"/>
    <property type="match status" value="1"/>
</dbReference>
<dbReference type="PIRSF" id="PIRSF029271">
    <property type="entry name" value="Pdx1"/>
    <property type="match status" value="1"/>
</dbReference>
<dbReference type="SUPFAM" id="SSF51366">
    <property type="entry name" value="Ribulose-phoshate binding barrel"/>
    <property type="match status" value="1"/>
</dbReference>
<dbReference type="PROSITE" id="PS01235">
    <property type="entry name" value="PDXS_SNZ_1"/>
    <property type="match status" value="1"/>
</dbReference>
<dbReference type="PROSITE" id="PS51129">
    <property type="entry name" value="PDXS_SNZ_2"/>
    <property type="match status" value="1"/>
</dbReference>
<feature type="chain" id="PRO_1000070392" description="Pyridoxal 5'-phosphate synthase subunit PdxS">
    <location>
        <begin position="1"/>
        <end position="301"/>
    </location>
</feature>
<feature type="region of interest" description="Disordered" evidence="2">
    <location>
        <begin position="273"/>
        <end position="301"/>
    </location>
</feature>
<feature type="compositionally biased region" description="Basic and acidic residues" evidence="2">
    <location>
        <begin position="292"/>
        <end position="301"/>
    </location>
</feature>
<feature type="active site" description="Schiff-base intermediate with D-ribose 5-phosphate" evidence="1">
    <location>
        <position position="88"/>
    </location>
</feature>
<feature type="binding site" evidence="1">
    <location>
        <position position="31"/>
    </location>
    <ligand>
        <name>D-ribose 5-phosphate</name>
        <dbReference type="ChEBI" id="CHEBI:78346"/>
    </ligand>
</feature>
<feature type="binding site" evidence="1">
    <location>
        <position position="160"/>
    </location>
    <ligand>
        <name>D-ribose 5-phosphate</name>
        <dbReference type="ChEBI" id="CHEBI:78346"/>
    </ligand>
</feature>
<feature type="binding site" evidence="1">
    <location>
        <position position="172"/>
    </location>
    <ligand>
        <name>D-glyceraldehyde 3-phosphate</name>
        <dbReference type="ChEBI" id="CHEBI:59776"/>
    </ligand>
</feature>
<feature type="binding site" evidence="1">
    <location>
        <position position="221"/>
    </location>
    <ligand>
        <name>D-ribose 5-phosphate</name>
        <dbReference type="ChEBI" id="CHEBI:78346"/>
    </ligand>
</feature>
<feature type="binding site" evidence="1">
    <location>
        <begin position="242"/>
        <end position="243"/>
    </location>
    <ligand>
        <name>D-ribose 5-phosphate</name>
        <dbReference type="ChEBI" id="CHEBI:78346"/>
    </ligand>
</feature>
<gene>
    <name evidence="1" type="primary">pdxS</name>
    <name type="ordered locus">NP_4528A</name>
</gene>
<name>PDXS_NATPD</name>
<organism>
    <name type="scientific">Natronomonas pharaonis (strain ATCC 35678 / DSM 2160 / CIP 103997 / JCM 8858 / NBRC 14720 / NCIMB 2260 / Gabara)</name>
    <name type="common">Halobacterium pharaonis</name>
    <dbReference type="NCBI Taxonomy" id="348780"/>
    <lineage>
        <taxon>Archaea</taxon>
        <taxon>Methanobacteriati</taxon>
        <taxon>Methanobacteriota</taxon>
        <taxon>Stenosarchaea group</taxon>
        <taxon>Halobacteria</taxon>
        <taxon>Halobacteriales</taxon>
        <taxon>Haloarculaceae</taxon>
        <taxon>Natronomonas</taxon>
    </lineage>
</organism>
<comment type="function">
    <text evidence="1">Catalyzes the formation of pyridoxal 5'-phosphate from ribose 5-phosphate (RBP), glyceraldehyde 3-phosphate (G3P) and ammonia. The ammonia is provided by the PdxT subunit. Can also use ribulose 5-phosphate and dihydroxyacetone phosphate as substrates, resulting from enzyme-catalyzed isomerization of RBP and G3P, respectively.</text>
</comment>
<comment type="catalytic activity">
    <reaction evidence="1">
        <text>aldehydo-D-ribose 5-phosphate + D-glyceraldehyde 3-phosphate + L-glutamine = pyridoxal 5'-phosphate + L-glutamate + phosphate + 3 H2O + H(+)</text>
        <dbReference type="Rhea" id="RHEA:31507"/>
        <dbReference type="ChEBI" id="CHEBI:15377"/>
        <dbReference type="ChEBI" id="CHEBI:15378"/>
        <dbReference type="ChEBI" id="CHEBI:29985"/>
        <dbReference type="ChEBI" id="CHEBI:43474"/>
        <dbReference type="ChEBI" id="CHEBI:58273"/>
        <dbReference type="ChEBI" id="CHEBI:58359"/>
        <dbReference type="ChEBI" id="CHEBI:59776"/>
        <dbReference type="ChEBI" id="CHEBI:597326"/>
        <dbReference type="EC" id="4.3.3.6"/>
    </reaction>
</comment>
<comment type="pathway">
    <text evidence="1">Cofactor biosynthesis; pyridoxal 5'-phosphate biosynthesis.</text>
</comment>
<comment type="subunit">
    <text evidence="1">In the presence of PdxT, forms a dodecamer of heterodimers.</text>
</comment>
<comment type="similarity">
    <text evidence="1">Belongs to the PdxS/SNZ family.</text>
</comment>
<reference key="1">
    <citation type="journal article" date="2005" name="Genome Res.">
        <title>Living with two extremes: conclusions from the genome sequence of Natronomonas pharaonis.</title>
        <authorList>
            <person name="Falb M."/>
            <person name="Pfeiffer F."/>
            <person name="Palm P."/>
            <person name="Rodewald K."/>
            <person name="Hickmann V."/>
            <person name="Tittor J."/>
            <person name="Oesterhelt D."/>
        </authorList>
    </citation>
    <scope>NUCLEOTIDE SEQUENCE [LARGE SCALE GENOMIC DNA]</scope>
    <source>
        <strain>ATCC 35678 / DSM 2160 / CIP 103997 / JCM 8858 / NBRC 14720 / NCIMB 2260 / Gabara</strain>
    </source>
</reference>
<sequence>MSNTDLEELRRGTDLVKRGFAKMQKGGVIMDVVTREQARIAEDAGAVAVMHLESVPADIRKRGGVARMADPGGLEDVIDEVSIPVMGKARIGHTAEAQILEATGADMIDESEVLTQADDRYHIDKREFTAPFVCGARNLGEALRRIDEGAAMIRTKGEAGTGDVNQAVTHQRNIQRSIRKLSGMDYEERDEWAREHGAPRELVHETAEMGRLPVVNFAAGGIATPADAALMMQLGCDGIFVGSGIFGAENPQAMGEAVVAAVNNYDDPETLKEIAKSPGKGMKGQANETLPEEEKLQDRGI</sequence>
<proteinExistence type="inferred from homology"/>
<protein>
    <recommendedName>
        <fullName evidence="1">Pyridoxal 5'-phosphate synthase subunit PdxS</fullName>
        <shortName evidence="1">PLP synthase subunit PdxS</shortName>
        <ecNumber evidence="1">4.3.3.6</ecNumber>
    </recommendedName>
    <alternativeName>
        <fullName evidence="1">Pdx1</fullName>
    </alternativeName>
</protein>